<keyword id="KW-0963">Cytoplasm</keyword>
<keyword id="KW-0396">Initiation factor</keyword>
<keyword id="KW-0648">Protein biosynthesis</keyword>
<keyword id="KW-1185">Reference proteome</keyword>
<keyword id="KW-0694">RNA-binding</keyword>
<keyword id="KW-0699">rRNA-binding</keyword>
<gene>
    <name evidence="1" type="primary">infA1</name>
    <name type="synonym">infA3</name>
    <name type="ordered locus">H16_A2433</name>
</gene>
<feature type="chain" id="PRO_0000338896" description="Translation initiation factor IF-1 1">
    <location>
        <begin position="1"/>
        <end position="73"/>
    </location>
</feature>
<feature type="domain" description="S1-like" evidence="1">
    <location>
        <begin position="1"/>
        <end position="72"/>
    </location>
</feature>
<sequence length="73" mass="8394">MAKEELIEFGGVVSEALPDNRYRVTLENGVEIWAYASGKMQKHRIRILAGDRVTLEMSPYDLTKGRINFRHKS</sequence>
<protein>
    <recommendedName>
        <fullName evidence="1">Translation initiation factor IF-1 1</fullName>
    </recommendedName>
</protein>
<reference key="1">
    <citation type="journal article" date="2006" name="Nat. Biotechnol.">
        <title>Genome sequence of the bioplastic-producing 'Knallgas' bacterium Ralstonia eutropha H16.</title>
        <authorList>
            <person name="Pohlmann A."/>
            <person name="Fricke W.F."/>
            <person name="Reinecke F."/>
            <person name="Kusian B."/>
            <person name="Liesegang H."/>
            <person name="Cramm R."/>
            <person name="Eitinger T."/>
            <person name="Ewering C."/>
            <person name="Poetter M."/>
            <person name="Schwartz E."/>
            <person name="Strittmatter A."/>
            <person name="Voss I."/>
            <person name="Gottschalk G."/>
            <person name="Steinbuechel A."/>
            <person name="Friedrich B."/>
            <person name="Bowien B."/>
        </authorList>
    </citation>
    <scope>NUCLEOTIDE SEQUENCE [LARGE SCALE GENOMIC DNA]</scope>
    <source>
        <strain>ATCC 17699 / DSM 428 / KCTC 22496 / NCIMB 10442 / H16 / Stanier 337</strain>
    </source>
</reference>
<evidence type="ECO:0000255" key="1">
    <source>
        <dbReference type="HAMAP-Rule" id="MF_00075"/>
    </source>
</evidence>
<comment type="function">
    <text evidence="1">One of the essential components for the initiation of protein synthesis. Stabilizes the binding of IF-2 and IF-3 on the 30S subunit to which N-formylmethionyl-tRNA(fMet) subsequently binds. Helps modulate mRNA selection, yielding the 30S pre-initiation complex (PIC). Upon addition of the 50S ribosomal subunit IF-1, IF-2 and IF-3 are released leaving the mature 70S translation initiation complex.</text>
</comment>
<comment type="subunit">
    <text evidence="1">Component of the 30S ribosomal translation pre-initiation complex which assembles on the 30S ribosome in the order IF-2 and IF-3, IF-1 and N-formylmethionyl-tRNA(fMet); mRNA recruitment can occur at any time during PIC assembly.</text>
</comment>
<comment type="subcellular location">
    <subcellularLocation>
        <location evidence="1">Cytoplasm</location>
    </subcellularLocation>
</comment>
<comment type="similarity">
    <text evidence="1">Belongs to the IF-1 family.</text>
</comment>
<name>IF11_CUPNH</name>
<accession>Q0K8Z9</accession>
<dbReference type="EMBL" id="AM260479">
    <property type="protein sequence ID" value="CAJ93522.1"/>
    <property type="molecule type" value="Genomic_DNA"/>
</dbReference>
<dbReference type="SMR" id="Q0K8Z9"/>
<dbReference type="STRING" id="381666.H16_A2433"/>
<dbReference type="KEGG" id="reh:H16_A2433"/>
<dbReference type="eggNOG" id="COG0361">
    <property type="taxonomic scope" value="Bacteria"/>
</dbReference>
<dbReference type="HOGENOM" id="CLU_151267_1_0_4"/>
<dbReference type="OrthoDB" id="9803250at2"/>
<dbReference type="Proteomes" id="UP000008210">
    <property type="component" value="Chromosome 1"/>
</dbReference>
<dbReference type="GO" id="GO:0005829">
    <property type="term" value="C:cytosol"/>
    <property type="evidence" value="ECO:0007669"/>
    <property type="project" value="TreeGrafter"/>
</dbReference>
<dbReference type="GO" id="GO:0043022">
    <property type="term" value="F:ribosome binding"/>
    <property type="evidence" value="ECO:0007669"/>
    <property type="project" value="UniProtKB-UniRule"/>
</dbReference>
<dbReference type="GO" id="GO:0019843">
    <property type="term" value="F:rRNA binding"/>
    <property type="evidence" value="ECO:0007669"/>
    <property type="project" value="UniProtKB-UniRule"/>
</dbReference>
<dbReference type="GO" id="GO:0003743">
    <property type="term" value="F:translation initiation factor activity"/>
    <property type="evidence" value="ECO:0007669"/>
    <property type="project" value="UniProtKB-UniRule"/>
</dbReference>
<dbReference type="CDD" id="cd04451">
    <property type="entry name" value="S1_IF1"/>
    <property type="match status" value="1"/>
</dbReference>
<dbReference type="FunFam" id="2.40.50.140:FF:000002">
    <property type="entry name" value="Translation initiation factor IF-1"/>
    <property type="match status" value="1"/>
</dbReference>
<dbReference type="Gene3D" id="2.40.50.140">
    <property type="entry name" value="Nucleic acid-binding proteins"/>
    <property type="match status" value="1"/>
</dbReference>
<dbReference type="HAMAP" id="MF_00075">
    <property type="entry name" value="IF_1"/>
    <property type="match status" value="1"/>
</dbReference>
<dbReference type="InterPro" id="IPR012340">
    <property type="entry name" value="NA-bd_OB-fold"/>
</dbReference>
<dbReference type="InterPro" id="IPR006196">
    <property type="entry name" value="RNA-binding_domain_S1_IF1"/>
</dbReference>
<dbReference type="InterPro" id="IPR004368">
    <property type="entry name" value="TIF_IF1"/>
</dbReference>
<dbReference type="NCBIfam" id="TIGR00008">
    <property type="entry name" value="infA"/>
    <property type="match status" value="1"/>
</dbReference>
<dbReference type="PANTHER" id="PTHR33370">
    <property type="entry name" value="TRANSLATION INITIATION FACTOR IF-1, CHLOROPLASTIC"/>
    <property type="match status" value="1"/>
</dbReference>
<dbReference type="PANTHER" id="PTHR33370:SF1">
    <property type="entry name" value="TRANSLATION INITIATION FACTOR IF-1, CHLOROPLASTIC"/>
    <property type="match status" value="1"/>
</dbReference>
<dbReference type="Pfam" id="PF01176">
    <property type="entry name" value="eIF-1a"/>
    <property type="match status" value="1"/>
</dbReference>
<dbReference type="SUPFAM" id="SSF50249">
    <property type="entry name" value="Nucleic acid-binding proteins"/>
    <property type="match status" value="1"/>
</dbReference>
<dbReference type="PROSITE" id="PS50832">
    <property type="entry name" value="S1_IF1_TYPE"/>
    <property type="match status" value="1"/>
</dbReference>
<organism>
    <name type="scientific">Cupriavidus necator (strain ATCC 17699 / DSM 428 / KCTC 22496 / NCIMB 10442 / H16 / Stanier 337)</name>
    <name type="common">Ralstonia eutropha</name>
    <dbReference type="NCBI Taxonomy" id="381666"/>
    <lineage>
        <taxon>Bacteria</taxon>
        <taxon>Pseudomonadati</taxon>
        <taxon>Pseudomonadota</taxon>
        <taxon>Betaproteobacteria</taxon>
        <taxon>Burkholderiales</taxon>
        <taxon>Burkholderiaceae</taxon>
        <taxon>Cupriavidus</taxon>
    </lineage>
</organism>
<proteinExistence type="inferred from homology"/>